<sequence length="45" mass="5314">MSKRTFQPNNRRRARTHGFRLRMRTRAGRSILSARRSKGRSQLSA</sequence>
<proteinExistence type="inferred from homology"/>
<accession>A8L8W3</accession>
<comment type="similarity">
    <text evidence="1">Belongs to the bacterial ribosomal protein bL34 family.</text>
</comment>
<protein>
    <recommendedName>
        <fullName evidence="1">Large ribosomal subunit protein bL34</fullName>
    </recommendedName>
    <alternativeName>
        <fullName evidence="3">50S ribosomal protein L34</fullName>
    </alternativeName>
</protein>
<name>RL34_PARS2</name>
<reference key="1">
    <citation type="journal article" date="2007" name="Genome Res.">
        <title>Genome characteristics of facultatively symbiotic Frankia sp. strains reflect host range and host plant biogeography.</title>
        <authorList>
            <person name="Normand P."/>
            <person name="Lapierre P."/>
            <person name="Tisa L.S."/>
            <person name="Gogarten J.P."/>
            <person name="Alloisio N."/>
            <person name="Bagnarol E."/>
            <person name="Bassi C.A."/>
            <person name="Berry A.M."/>
            <person name="Bickhart D.M."/>
            <person name="Choisne N."/>
            <person name="Couloux A."/>
            <person name="Cournoyer B."/>
            <person name="Cruveiller S."/>
            <person name="Daubin V."/>
            <person name="Demange N."/>
            <person name="Francino M.P."/>
            <person name="Goltsman E."/>
            <person name="Huang Y."/>
            <person name="Kopp O.R."/>
            <person name="Labarre L."/>
            <person name="Lapidus A."/>
            <person name="Lavire C."/>
            <person name="Marechal J."/>
            <person name="Martinez M."/>
            <person name="Mastronunzio J.E."/>
            <person name="Mullin B.C."/>
            <person name="Niemann J."/>
            <person name="Pujic P."/>
            <person name="Rawnsley T."/>
            <person name="Rouy Z."/>
            <person name="Schenowitz C."/>
            <person name="Sellstedt A."/>
            <person name="Tavares F."/>
            <person name="Tomkins J.P."/>
            <person name="Vallenet D."/>
            <person name="Valverde C."/>
            <person name="Wall L.G."/>
            <person name="Wang Y."/>
            <person name="Medigue C."/>
            <person name="Benson D.R."/>
        </authorList>
    </citation>
    <scope>NUCLEOTIDE SEQUENCE [LARGE SCALE GENOMIC DNA]</scope>
    <source>
        <strain>EAN1pec</strain>
    </source>
</reference>
<organism>
    <name type="scientific">Parafrankia sp. (strain EAN1pec)</name>
    <dbReference type="NCBI Taxonomy" id="298653"/>
    <lineage>
        <taxon>Bacteria</taxon>
        <taxon>Bacillati</taxon>
        <taxon>Actinomycetota</taxon>
        <taxon>Actinomycetes</taxon>
        <taxon>Frankiales</taxon>
        <taxon>Frankiaceae</taxon>
        <taxon>Parafrankia</taxon>
    </lineage>
</organism>
<keyword id="KW-0687">Ribonucleoprotein</keyword>
<keyword id="KW-0689">Ribosomal protein</keyword>
<evidence type="ECO:0000255" key="1">
    <source>
        <dbReference type="HAMAP-Rule" id="MF_00391"/>
    </source>
</evidence>
<evidence type="ECO:0000256" key="2">
    <source>
        <dbReference type="SAM" id="MobiDB-lite"/>
    </source>
</evidence>
<evidence type="ECO:0000305" key="3"/>
<feature type="chain" id="PRO_1000196053" description="Large ribosomal subunit protein bL34">
    <location>
        <begin position="1"/>
        <end position="45"/>
    </location>
</feature>
<feature type="region of interest" description="Disordered" evidence="2">
    <location>
        <begin position="26"/>
        <end position="45"/>
    </location>
</feature>
<gene>
    <name evidence="1" type="primary">rpmH</name>
    <name type="ordered locus">Franean1_7341</name>
</gene>
<dbReference type="EMBL" id="CP000820">
    <property type="protein sequence ID" value="ABW16660.1"/>
    <property type="molecule type" value="Genomic_DNA"/>
</dbReference>
<dbReference type="RefSeq" id="WP_020464714.1">
    <property type="nucleotide sequence ID" value="NC_009921.1"/>
</dbReference>
<dbReference type="SMR" id="A8L8W3"/>
<dbReference type="STRING" id="298653.Franean1_7341"/>
<dbReference type="KEGG" id="fre:Franean1_7341"/>
<dbReference type="eggNOG" id="COG0230">
    <property type="taxonomic scope" value="Bacteria"/>
</dbReference>
<dbReference type="HOGENOM" id="CLU_129938_2_1_11"/>
<dbReference type="GO" id="GO:1990904">
    <property type="term" value="C:ribonucleoprotein complex"/>
    <property type="evidence" value="ECO:0007669"/>
    <property type="project" value="UniProtKB-KW"/>
</dbReference>
<dbReference type="GO" id="GO:0005840">
    <property type="term" value="C:ribosome"/>
    <property type="evidence" value="ECO:0007669"/>
    <property type="project" value="UniProtKB-KW"/>
</dbReference>
<dbReference type="GO" id="GO:0003735">
    <property type="term" value="F:structural constituent of ribosome"/>
    <property type="evidence" value="ECO:0007669"/>
    <property type="project" value="InterPro"/>
</dbReference>
<dbReference type="GO" id="GO:0006412">
    <property type="term" value="P:translation"/>
    <property type="evidence" value="ECO:0007669"/>
    <property type="project" value="UniProtKB-UniRule"/>
</dbReference>
<dbReference type="FunFam" id="1.10.287.3980:FF:000001">
    <property type="entry name" value="Mitochondrial ribosomal protein L34"/>
    <property type="match status" value="1"/>
</dbReference>
<dbReference type="Gene3D" id="1.10.287.3980">
    <property type="match status" value="1"/>
</dbReference>
<dbReference type="HAMAP" id="MF_00391">
    <property type="entry name" value="Ribosomal_bL34"/>
    <property type="match status" value="1"/>
</dbReference>
<dbReference type="InterPro" id="IPR000271">
    <property type="entry name" value="Ribosomal_bL34"/>
</dbReference>
<dbReference type="InterPro" id="IPR020939">
    <property type="entry name" value="Ribosomal_bL34_CS"/>
</dbReference>
<dbReference type="NCBIfam" id="TIGR01030">
    <property type="entry name" value="rpmH_bact"/>
    <property type="match status" value="1"/>
</dbReference>
<dbReference type="PANTHER" id="PTHR14503:SF4">
    <property type="entry name" value="LARGE RIBOSOMAL SUBUNIT PROTEIN BL34M"/>
    <property type="match status" value="1"/>
</dbReference>
<dbReference type="PANTHER" id="PTHR14503">
    <property type="entry name" value="MITOCHONDRIAL RIBOSOMAL PROTEIN 34 FAMILY MEMBER"/>
    <property type="match status" value="1"/>
</dbReference>
<dbReference type="Pfam" id="PF00468">
    <property type="entry name" value="Ribosomal_L34"/>
    <property type="match status" value="1"/>
</dbReference>
<dbReference type="PROSITE" id="PS00784">
    <property type="entry name" value="RIBOSOMAL_L34"/>
    <property type="match status" value="1"/>
</dbReference>